<feature type="chain" id="PRO_0000158444" description="Ribose-5-phosphate isomerase A">
    <location>
        <begin position="1"/>
        <end position="219"/>
    </location>
</feature>
<feature type="active site" description="Proton acceptor" evidence="1">
    <location>
        <position position="103"/>
    </location>
</feature>
<feature type="binding site" evidence="1">
    <location>
        <begin position="28"/>
        <end position="31"/>
    </location>
    <ligand>
        <name>substrate</name>
    </ligand>
</feature>
<feature type="binding site" evidence="1">
    <location>
        <begin position="81"/>
        <end position="84"/>
    </location>
    <ligand>
        <name>substrate</name>
    </ligand>
</feature>
<feature type="binding site" evidence="1">
    <location>
        <begin position="94"/>
        <end position="97"/>
    </location>
    <ligand>
        <name>substrate</name>
    </ligand>
</feature>
<feature type="binding site" evidence="1">
    <location>
        <position position="121"/>
    </location>
    <ligand>
        <name>substrate</name>
    </ligand>
</feature>
<organism>
    <name type="scientific">Pasteurella multocida (strain Pm70)</name>
    <dbReference type="NCBI Taxonomy" id="272843"/>
    <lineage>
        <taxon>Bacteria</taxon>
        <taxon>Pseudomonadati</taxon>
        <taxon>Pseudomonadota</taxon>
        <taxon>Gammaproteobacteria</taxon>
        <taxon>Pasteurellales</taxon>
        <taxon>Pasteurellaceae</taxon>
        <taxon>Pasteurella</taxon>
    </lineage>
</organism>
<protein>
    <recommendedName>
        <fullName evidence="1">Ribose-5-phosphate isomerase A</fullName>
        <ecNumber evidence="1">5.3.1.6</ecNumber>
    </recommendedName>
    <alternativeName>
        <fullName evidence="1">Phosphoriboisomerase A</fullName>
        <shortName evidence="1">PRI</shortName>
    </alternativeName>
</protein>
<comment type="function">
    <text evidence="1">Catalyzes the reversible conversion of ribose-5-phosphate to ribulose 5-phosphate.</text>
</comment>
<comment type="catalytic activity">
    <reaction evidence="1">
        <text>aldehydo-D-ribose 5-phosphate = D-ribulose 5-phosphate</text>
        <dbReference type="Rhea" id="RHEA:14657"/>
        <dbReference type="ChEBI" id="CHEBI:58121"/>
        <dbReference type="ChEBI" id="CHEBI:58273"/>
        <dbReference type="EC" id="5.3.1.6"/>
    </reaction>
</comment>
<comment type="pathway">
    <text evidence="1">Carbohydrate degradation; pentose phosphate pathway; D-ribose 5-phosphate from D-ribulose 5-phosphate (non-oxidative stage): step 1/1.</text>
</comment>
<comment type="subunit">
    <text evidence="1">Homodimer.</text>
</comment>
<comment type="similarity">
    <text evidence="1">Belongs to the ribose 5-phosphate isomerase family.</text>
</comment>
<sequence length="219" mass="23081">MDQLEMKKMAAAAALQYVKPDSIIGVGSGSTVNCFIEALGSMRDQIKGAVAASKASEALLAKQGIEVFSANEVSSLDIYVDGADEINPQKMMIKGGGAALTREKIVAALAKKFICIVDTSKQVDVLGSTFALPVEVIPMARSQVARKLVALGGSPEYREGVVTDNGNVILDVYHFAIMNPVEMEKELNNVPGVVTNGIFALRAADIIIVGTPEGAKVIE</sequence>
<reference key="1">
    <citation type="journal article" date="2001" name="Proc. Natl. Acad. Sci. U.S.A.">
        <title>Complete genomic sequence of Pasteurella multocida Pm70.</title>
        <authorList>
            <person name="May B.J."/>
            <person name="Zhang Q."/>
            <person name="Li L.L."/>
            <person name="Paustian M.L."/>
            <person name="Whittam T.S."/>
            <person name="Kapur V."/>
        </authorList>
    </citation>
    <scope>NUCLEOTIDE SEQUENCE [LARGE SCALE GENOMIC DNA]</scope>
    <source>
        <strain>Pm70</strain>
    </source>
</reference>
<accession>P57961</accession>
<proteinExistence type="inferred from homology"/>
<gene>
    <name evidence="1" type="primary">rpiA</name>
    <name type="ordered locus">PM1670</name>
</gene>
<evidence type="ECO:0000255" key="1">
    <source>
        <dbReference type="HAMAP-Rule" id="MF_00170"/>
    </source>
</evidence>
<name>RPIA_PASMU</name>
<dbReference type="EC" id="5.3.1.6" evidence="1"/>
<dbReference type="EMBL" id="AE004439">
    <property type="protein sequence ID" value="AAK03754.1"/>
    <property type="molecule type" value="Genomic_DNA"/>
</dbReference>
<dbReference type="RefSeq" id="WP_005718572.1">
    <property type="nucleotide sequence ID" value="NC_002663.1"/>
</dbReference>
<dbReference type="SMR" id="P57961"/>
<dbReference type="STRING" id="272843.PM1670"/>
<dbReference type="EnsemblBacteria" id="AAK03754">
    <property type="protein sequence ID" value="AAK03754"/>
    <property type="gene ID" value="PM1670"/>
</dbReference>
<dbReference type="GeneID" id="77206591"/>
<dbReference type="KEGG" id="pmu:PM1670"/>
<dbReference type="HOGENOM" id="CLU_056590_1_1_6"/>
<dbReference type="OrthoDB" id="5870696at2"/>
<dbReference type="UniPathway" id="UPA00115">
    <property type="reaction ID" value="UER00412"/>
</dbReference>
<dbReference type="Proteomes" id="UP000000809">
    <property type="component" value="Chromosome"/>
</dbReference>
<dbReference type="GO" id="GO:0005829">
    <property type="term" value="C:cytosol"/>
    <property type="evidence" value="ECO:0007669"/>
    <property type="project" value="TreeGrafter"/>
</dbReference>
<dbReference type="GO" id="GO:0004751">
    <property type="term" value="F:ribose-5-phosphate isomerase activity"/>
    <property type="evidence" value="ECO:0007669"/>
    <property type="project" value="UniProtKB-UniRule"/>
</dbReference>
<dbReference type="GO" id="GO:0006014">
    <property type="term" value="P:D-ribose metabolic process"/>
    <property type="evidence" value="ECO:0007669"/>
    <property type="project" value="TreeGrafter"/>
</dbReference>
<dbReference type="GO" id="GO:0009052">
    <property type="term" value="P:pentose-phosphate shunt, non-oxidative branch"/>
    <property type="evidence" value="ECO:0007669"/>
    <property type="project" value="UniProtKB-UniRule"/>
</dbReference>
<dbReference type="CDD" id="cd01398">
    <property type="entry name" value="RPI_A"/>
    <property type="match status" value="1"/>
</dbReference>
<dbReference type="FunFam" id="3.30.70.260:FF:000004">
    <property type="entry name" value="Ribose-5-phosphate isomerase A"/>
    <property type="match status" value="1"/>
</dbReference>
<dbReference type="FunFam" id="3.40.50.1360:FF:000001">
    <property type="entry name" value="Ribose-5-phosphate isomerase A"/>
    <property type="match status" value="1"/>
</dbReference>
<dbReference type="Gene3D" id="3.30.70.260">
    <property type="match status" value="1"/>
</dbReference>
<dbReference type="Gene3D" id="3.40.50.1360">
    <property type="match status" value="1"/>
</dbReference>
<dbReference type="HAMAP" id="MF_00170">
    <property type="entry name" value="Rib_5P_isom_A"/>
    <property type="match status" value="1"/>
</dbReference>
<dbReference type="InterPro" id="IPR037171">
    <property type="entry name" value="NagB/RpiA_transferase-like"/>
</dbReference>
<dbReference type="InterPro" id="IPR020672">
    <property type="entry name" value="Ribose5P_isomerase_typA_subgr"/>
</dbReference>
<dbReference type="InterPro" id="IPR004788">
    <property type="entry name" value="Ribose5P_isomerase_type_A"/>
</dbReference>
<dbReference type="NCBIfam" id="NF001924">
    <property type="entry name" value="PRK00702.1"/>
    <property type="match status" value="1"/>
</dbReference>
<dbReference type="NCBIfam" id="TIGR00021">
    <property type="entry name" value="rpiA"/>
    <property type="match status" value="1"/>
</dbReference>
<dbReference type="PANTHER" id="PTHR11934">
    <property type="entry name" value="RIBOSE-5-PHOSPHATE ISOMERASE"/>
    <property type="match status" value="1"/>
</dbReference>
<dbReference type="PANTHER" id="PTHR11934:SF0">
    <property type="entry name" value="RIBOSE-5-PHOSPHATE ISOMERASE"/>
    <property type="match status" value="1"/>
</dbReference>
<dbReference type="Pfam" id="PF06026">
    <property type="entry name" value="Rib_5-P_isom_A"/>
    <property type="match status" value="1"/>
</dbReference>
<dbReference type="SUPFAM" id="SSF75445">
    <property type="entry name" value="D-ribose-5-phosphate isomerase (RpiA), lid domain"/>
    <property type="match status" value="1"/>
</dbReference>
<dbReference type="SUPFAM" id="SSF100950">
    <property type="entry name" value="NagB/RpiA/CoA transferase-like"/>
    <property type="match status" value="1"/>
</dbReference>
<keyword id="KW-0413">Isomerase</keyword>
<keyword id="KW-1185">Reference proteome</keyword>